<dbReference type="EMBL" id="AB023229">
    <property type="protein sequence ID" value="BAA76856.2"/>
    <property type="status" value="ALT_INIT"/>
    <property type="molecule type" value="mRNA"/>
</dbReference>
<dbReference type="EMBL" id="AL136749">
    <property type="protein sequence ID" value="CAB66683.2"/>
    <property type="molecule type" value="mRNA"/>
</dbReference>
<dbReference type="EMBL" id="AC009831">
    <property type="status" value="NOT_ANNOTATED_CDS"/>
    <property type="molecule type" value="Genomic_DNA"/>
</dbReference>
<dbReference type="EMBL" id="AC022960">
    <property type="status" value="NOT_ANNOTATED_CDS"/>
    <property type="molecule type" value="Genomic_DNA"/>
</dbReference>
<dbReference type="EMBL" id="BC127109">
    <property type="protein sequence ID" value="AAI27110.1"/>
    <property type="status" value="ALT_INIT"/>
    <property type="molecule type" value="mRNA"/>
</dbReference>
<dbReference type="EMBL" id="BC127110">
    <property type="protein sequence ID" value="AAI27111.1"/>
    <property type="status" value="ALT_INIT"/>
    <property type="molecule type" value="mRNA"/>
</dbReference>
<dbReference type="EMBL" id="AK001662">
    <property type="protein sequence ID" value="BAG50957.1"/>
    <property type="status" value="ALT_INIT"/>
    <property type="molecule type" value="mRNA"/>
</dbReference>
<dbReference type="CCDS" id="CCDS11901.1">
    <molecule id="Q9Y2L5-1"/>
</dbReference>
<dbReference type="RefSeq" id="NP_055754.2">
    <molecule id="Q9Y2L5-1"/>
    <property type="nucleotide sequence ID" value="NM_014939.3"/>
</dbReference>
<dbReference type="SMR" id="Q9Y2L5"/>
<dbReference type="BioGRID" id="116545">
    <property type="interactions" value="85"/>
</dbReference>
<dbReference type="ComplexPortal" id="CPX-4750">
    <property type="entry name" value="TRAPP III complex, TRAPPC2 variant"/>
</dbReference>
<dbReference type="ComplexPortal" id="CPX-6903">
    <property type="entry name" value="TRAPP III complex, TRAPPC2B variant"/>
</dbReference>
<dbReference type="CORUM" id="Q9Y2L5"/>
<dbReference type="DIP" id="DIP-48280N"/>
<dbReference type="FunCoup" id="Q9Y2L5">
    <property type="interactions" value="2669"/>
</dbReference>
<dbReference type="IntAct" id="Q9Y2L5">
    <property type="interactions" value="43"/>
</dbReference>
<dbReference type="MINT" id="Q9Y2L5"/>
<dbReference type="STRING" id="9606.ENSP00000283351"/>
<dbReference type="GlyConnect" id="1829">
    <property type="glycosylation" value="3 N-Linked glycans (1 site)"/>
</dbReference>
<dbReference type="GlyCosmos" id="Q9Y2L5">
    <property type="glycosylation" value="1 site, 4 glycans"/>
</dbReference>
<dbReference type="GlyGen" id="Q9Y2L5">
    <property type="glycosylation" value="2 sites, 4 N-linked glycans (1 site), 1 O-linked glycan (1 site)"/>
</dbReference>
<dbReference type="iPTMnet" id="Q9Y2L5"/>
<dbReference type="PhosphoSitePlus" id="Q9Y2L5"/>
<dbReference type="SwissPalm" id="Q9Y2L5"/>
<dbReference type="BioMuta" id="TRAPPC8"/>
<dbReference type="DMDM" id="296452850"/>
<dbReference type="jPOST" id="Q9Y2L5"/>
<dbReference type="MassIVE" id="Q9Y2L5"/>
<dbReference type="PaxDb" id="9606-ENSP00000283351"/>
<dbReference type="PeptideAtlas" id="Q9Y2L5"/>
<dbReference type="ProteomicsDB" id="85834">
    <molecule id="Q9Y2L5-1"/>
</dbReference>
<dbReference type="ProteomicsDB" id="85835">
    <molecule id="Q9Y2L5-2"/>
</dbReference>
<dbReference type="Pumba" id="Q9Y2L5"/>
<dbReference type="Antibodypedia" id="48760">
    <property type="antibodies" value="11 antibodies from 8 providers"/>
</dbReference>
<dbReference type="DNASU" id="22878"/>
<dbReference type="Ensembl" id="ENST00000283351.10">
    <molecule id="Q9Y2L5-1"/>
    <property type="protein sequence ID" value="ENSP00000283351.4"/>
    <property type="gene ID" value="ENSG00000153339.15"/>
</dbReference>
<dbReference type="GeneID" id="22878"/>
<dbReference type="KEGG" id="hsa:22878"/>
<dbReference type="MANE-Select" id="ENST00000283351.10">
    <property type="protein sequence ID" value="ENSP00000283351.4"/>
    <property type="RefSeq nucleotide sequence ID" value="NM_014939.5"/>
    <property type="RefSeq protein sequence ID" value="NP_055754.3"/>
</dbReference>
<dbReference type="UCSC" id="uc002kxc.5">
    <molecule id="Q9Y2L5-1"/>
    <property type="organism name" value="human"/>
</dbReference>
<dbReference type="AGR" id="HGNC:29169"/>
<dbReference type="CTD" id="22878"/>
<dbReference type="DisGeNET" id="22878"/>
<dbReference type="GeneCards" id="TRAPPC8"/>
<dbReference type="HGNC" id="HGNC:29169">
    <property type="gene designation" value="TRAPPC8"/>
</dbReference>
<dbReference type="HPA" id="ENSG00000153339">
    <property type="expression patterns" value="Low tissue specificity"/>
</dbReference>
<dbReference type="MIM" id="614136">
    <property type="type" value="gene"/>
</dbReference>
<dbReference type="neXtProt" id="NX_Q9Y2L5"/>
<dbReference type="OpenTargets" id="ENSG00000153339"/>
<dbReference type="PharmGKB" id="PA165429149"/>
<dbReference type="VEuPathDB" id="HostDB:ENSG00000153339"/>
<dbReference type="eggNOG" id="KOG1938">
    <property type="taxonomic scope" value="Eukaryota"/>
</dbReference>
<dbReference type="GeneTree" id="ENSGT00390000000568"/>
<dbReference type="HOGENOM" id="CLU_004823_2_0_1"/>
<dbReference type="InParanoid" id="Q9Y2L5"/>
<dbReference type="OMA" id="GHTISMW"/>
<dbReference type="OrthoDB" id="203724at2759"/>
<dbReference type="PAN-GO" id="Q9Y2L5">
    <property type="GO annotations" value="5 GO annotations based on evolutionary models"/>
</dbReference>
<dbReference type="PhylomeDB" id="Q9Y2L5"/>
<dbReference type="TreeFam" id="TF106128"/>
<dbReference type="PathwayCommons" id="Q9Y2L5"/>
<dbReference type="Reactome" id="R-HSA-8876198">
    <property type="pathway name" value="RAB GEFs exchange GTP for GDP on RABs"/>
</dbReference>
<dbReference type="SignaLink" id="Q9Y2L5"/>
<dbReference type="BioGRID-ORCS" id="22878">
    <property type="hits" value="808 hits in 1167 CRISPR screens"/>
</dbReference>
<dbReference type="ChiTaRS" id="TRAPPC8">
    <property type="organism name" value="human"/>
</dbReference>
<dbReference type="GeneWiki" id="KIAA1012"/>
<dbReference type="GenomeRNAi" id="22878"/>
<dbReference type="Pharos" id="Q9Y2L5">
    <property type="development level" value="Tdark"/>
</dbReference>
<dbReference type="PRO" id="PR:Q9Y2L5"/>
<dbReference type="Proteomes" id="UP000005640">
    <property type="component" value="Chromosome 18"/>
</dbReference>
<dbReference type="RNAct" id="Q9Y2L5">
    <property type="molecule type" value="protein"/>
</dbReference>
<dbReference type="Bgee" id="ENSG00000153339">
    <property type="expression patterns" value="Expressed in hair follicle and 211 other cell types or tissues"/>
</dbReference>
<dbReference type="ExpressionAtlas" id="Q9Y2L5">
    <property type="expression patterns" value="baseline and differential"/>
</dbReference>
<dbReference type="GO" id="GO:0005737">
    <property type="term" value="C:cytoplasm"/>
    <property type="evidence" value="ECO:0000303"/>
    <property type="project" value="ComplexPortal"/>
</dbReference>
<dbReference type="GO" id="GO:0005829">
    <property type="term" value="C:cytosol"/>
    <property type="evidence" value="ECO:0000304"/>
    <property type="project" value="Reactome"/>
</dbReference>
<dbReference type="GO" id="GO:0030008">
    <property type="term" value="C:TRAPP complex"/>
    <property type="evidence" value="ECO:0000314"/>
    <property type="project" value="UniProtKB"/>
</dbReference>
<dbReference type="GO" id="GO:1990072">
    <property type="term" value="C:TRAPPIII protein complex"/>
    <property type="evidence" value="ECO:0000318"/>
    <property type="project" value="GO_Central"/>
</dbReference>
<dbReference type="GO" id="GO:0032964">
    <property type="term" value="P:collagen biosynthetic process"/>
    <property type="evidence" value="ECO:0000315"/>
    <property type="project" value="UniProtKB"/>
</dbReference>
<dbReference type="GO" id="GO:0048208">
    <property type="term" value="P:COPII vesicle coating"/>
    <property type="evidence" value="ECO:0000303"/>
    <property type="project" value="ComplexPortal"/>
</dbReference>
<dbReference type="GO" id="GO:0006888">
    <property type="term" value="P:endoplasmic reticulum to Golgi vesicle-mediated transport"/>
    <property type="evidence" value="ECO:0000303"/>
    <property type="project" value="ComplexPortal"/>
</dbReference>
<dbReference type="GO" id="GO:0007030">
    <property type="term" value="P:Golgi organization"/>
    <property type="evidence" value="ECO:0000315"/>
    <property type="project" value="UniProtKB"/>
</dbReference>
<dbReference type="GO" id="GO:0099022">
    <property type="term" value="P:vesicle tethering"/>
    <property type="evidence" value="ECO:0000303"/>
    <property type="project" value="ComplexPortal"/>
</dbReference>
<dbReference type="InterPro" id="IPR011990">
    <property type="entry name" value="TPR-like_helical_dom_sf"/>
</dbReference>
<dbReference type="InterPro" id="IPR024420">
    <property type="entry name" value="TRAPP_III_complex_Trs85"/>
</dbReference>
<dbReference type="PANTHER" id="PTHR12975:SF6">
    <property type="entry name" value="TRAFFICKING PROTEIN PARTICLE COMPLEX SUBUNIT 8"/>
    <property type="match status" value="1"/>
</dbReference>
<dbReference type="PANTHER" id="PTHR12975">
    <property type="entry name" value="TRANSPORT PROTEIN TRAPP"/>
    <property type="match status" value="1"/>
</dbReference>
<dbReference type="Pfam" id="PF24545">
    <property type="entry name" value="Ig_TPPC8_2nd"/>
    <property type="match status" value="1"/>
</dbReference>
<dbReference type="Pfam" id="PF24544">
    <property type="entry name" value="Ig_TPPC8_3rd"/>
    <property type="match status" value="1"/>
</dbReference>
<dbReference type="Pfam" id="PF24546">
    <property type="entry name" value="Ig_TPPC8_4th"/>
    <property type="match status" value="1"/>
</dbReference>
<dbReference type="Pfam" id="PF24542">
    <property type="entry name" value="Ig_TPPC8_C"/>
    <property type="match status" value="1"/>
</dbReference>
<dbReference type="Pfam" id="PF12739">
    <property type="entry name" value="TRAPPC-Trs85"/>
    <property type="match status" value="1"/>
</dbReference>
<dbReference type="SUPFAM" id="SSF48452">
    <property type="entry name" value="TPR-like"/>
    <property type="match status" value="1"/>
</dbReference>
<feature type="chain" id="PRO_0000065641" description="Trafficking protein particle complex subunit 8">
    <location>
        <begin position="1"/>
        <end position="1435"/>
    </location>
</feature>
<feature type="region of interest" description="Disordered" evidence="2">
    <location>
        <begin position="301"/>
        <end position="321"/>
    </location>
</feature>
<feature type="compositionally biased region" description="Polar residues" evidence="2">
    <location>
        <begin position="302"/>
        <end position="312"/>
    </location>
</feature>
<feature type="modified residue" description="Phosphoserine" evidence="12 14">
    <location>
        <position position="273"/>
    </location>
</feature>
<feature type="modified residue" description="Phosphoserine" evidence="13">
    <location>
        <position position="279"/>
    </location>
</feature>
<feature type="modified residue" description="Phosphoserine" evidence="13">
    <location>
        <position position="309"/>
    </location>
</feature>
<feature type="splice variant" id="VSP_014454" description="In isoform 2." evidence="10">
    <original>VFFIHFPTGLL</original>
    <variation>TLALAQEVNQR</variation>
    <location>
        <begin position="916"/>
        <end position="926"/>
    </location>
</feature>
<feature type="splice variant" id="VSP_004000" description="In isoform 2." evidence="10">
    <location>
        <begin position="927"/>
        <end position="1002"/>
    </location>
</feature>
<feature type="sequence variant" id="VAR_057814" description="In dbSNP:rs34292533.">
    <original>N</original>
    <variation>S</variation>
    <location>
        <position position="74"/>
    </location>
</feature>
<feature type="sequence variant" id="VAR_060250" description="In dbSNP:rs6506948." evidence="3 4">
    <original>L</original>
    <variation>S</variation>
    <location>
        <position position="137"/>
    </location>
</feature>
<feature type="sequence variant" id="VAR_060251" description="In dbSNP:rs17857486.">
    <original>S</original>
    <variation>G</variation>
    <location>
        <position position="517"/>
    </location>
</feature>
<feature type="sequence variant" id="VAR_036270" description="In a breast cancer sample; somatic mutation; dbSNP:rs754569032." evidence="6">
    <original>R</original>
    <variation>Q</variation>
    <location>
        <position position="537"/>
    </location>
</feature>
<feature type="sequence variant" id="VAR_057815" description="In dbSNP:rs16962530.">
    <original>Q</original>
    <variation>E</variation>
    <location>
        <position position="708"/>
    </location>
</feature>
<feature type="sequence variant" id="VAR_060252" description="In dbSNP:rs2170562.">
    <original>R</original>
    <variation>H</variation>
    <location>
        <position position="954"/>
    </location>
</feature>
<feature type="sequence variant" id="VAR_060253" description="In dbSNP:rs3737374." evidence="3">
    <original>T</original>
    <variation>A</variation>
    <location>
        <position position="1146"/>
    </location>
</feature>
<feature type="sequence variant" id="VAR_057816" description="In dbSNP:rs36034613.">
    <original>I</original>
    <variation>V</variation>
    <location>
        <position position="1189"/>
    </location>
</feature>
<feature type="sequence variant" id="VAR_060254" description="In dbSNP:rs633500.">
    <original>S</original>
    <variation>P</variation>
    <location>
        <position position="1298"/>
    </location>
</feature>
<feature type="mutagenesis site" description="Attenuates interaction with TMEM131." evidence="9">
    <original>WLRGPD</original>
    <variation>ALAGPA</variation>
    <location>
        <begin position="1035"/>
        <end position="1040"/>
    </location>
</feature>
<feature type="sequence conflict" description="In Ref. 2; CAB66683." evidence="11" ref="2">
    <original>K</original>
    <variation>E</variation>
    <location>
        <position position="251"/>
    </location>
</feature>
<feature type="sequence conflict" description="In Ref. 5; BAG50957." evidence="11" ref="5">
    <original>E</original>
    <variation>G</variation>
    <location>
        <position position="631"/>
    </location>
</feature>
<feature type="sequence conflict" description="In Ref. 5; BAG50957." evidence="11" ref="5">
    <original>P</original>
    <variation>T</variation>
    <location>
        <position position="1060"/>
    </location>
</feature>
<comment type="function">
    <text evidence="7 8 9">Plays a role in endoplasmic reticulum to Golgi apparatus trafficking at a very early stage (PubMed:21525244). Maintains together with TBC1D14 the cycling pool of ATG9 required for initiation of autophagy (PubMed:26711178). Involved in collagen secretion (PubMed:32095531).</text>
</comment>
<comment type="subunit">
    <text evidence="5 7 8 9">Component of the multisubunit TRAPP (transport protein particle) complex, which includes TRAPPC2, TRAPPC2L, TRAPPC3, TRAPPC3L, TRAPPC4, TRAPPC5, TRAPPC8, TRAPPC9, TRAPPC10, TRAPPC11 and TRAPPC12 (PubMed:11805826, PubMed:21525244). Interacts with TBC1D14 (PubMed:26711178). Interacts (via C-terminus) with TMEM131 (via C-terminus); the interaction is direct and is involved in collagen secretion (PubMed:32095531).</text>
</comment>
<comment type="interaction">
    <interactant intactId="EBI-2820056">
        <id>Q9Y2L5</id>
    </interactant>
    <interactant intactId="EBI-2857298">
        <id>A5PLN9</id>
        <label>TRAPPC13</label>
    </interactant>
    <organismsDiffer>false</organismsDiffer>
    <experiments>2</experiments>
</comment>
<comment type="interaction">
    <interactant intactId="EBI-2820056">
        <id>Q9Y2L5</id>
    </interactant>
    <interactant intactId="EBI-747601">
        <id>Q9UL33</id>
        <label>TRAPPC2L</label>
    </interactant>
    <organismsDiffer>false</organismsDiffer>
    <experiments>3</experiments>
</comment>
<comment type="interaction">
    <interactant intactId="EBI-2820056">
        <id>Q9Y2L5</id>
    </interactant>
    <interactant intactId="EBI-743566">
        <id>O43617</id>
        <label>TRAPPC3</label>
    </interactant>
    <organismsDiffer>false</organismsDiffer>
    <experiments>2</experiments>
</comment>
<comment type="subcellular location">
    <subcellularLocation>
        <location evidence="1">Golgi apparatus</location>
        <location evidence="1">cis-Golgi network</location>
    </subcellularLocation>
</comment>
<comment type="alternative products">
    <event type="alternative splicing"/>
    <isoform>
        <id>Q9Y2L5-1</id>
        <name>1</name>
        <sequence type="displayed"/>
    </isoform>
    <isoform>
        <id>Q9Y2L5-2</id>
        <name>2</name>
        <sequence type="described" ref="VSP_014454 VSP_004000"/>
    </isoform>
</comment>
<comment type="miscellaneous">
    <molecule>Isoform 2</molecule>
    <text evidence="11">May be produced at very low levels due to a premature stop codon in the mRNA, leading to nonsense-mediated mRNA decay.</text>
</comment>
<comment type="similarity">
    <text evidence="11">Belongs to the TRS85 family.</text>
</comment>
<comment type="sequence caution" evidence="11">
    <conflict type="erroneous initiation">
        <sequence resource="EMBL-CDS" id="AAI27110"/>
    </conflict>
    <text>Truncated N-terminus.</text>
</comment>
<comment type="sequence caution" evidence="11">
    <conflict type="erroneous initiation">
        <sequence resource="EMBL-CDS" id="AAI27111"/>
    </conflict>
    <text>Truncated N-terminus.</text>
</comment>
<comment type="sequence caution" evidence="11">
    <conflict type="erroneous initiation">
        <sequence resource="EMBL-CDS" id="BAA76856"/>
    </conflict>
    <text>Extended N-terminus.</text>
</comment>
<comment type="sequence caution" evidence="11">
    <conflict type="erroneous initiation">
        <sequence resource="EMBL-CDS" id="BAG50957"/>
    </conflict>
    <text>Truncated N-terminus.</text>
</comment>
<name>TPPC8_HUMAN</name>
<keyword id="KW-0025">Alternative splicing</keyword>
<keyword id="KW-0931">ER-Golgi transport</keyword>
<keyword id="KW-0333">Golgi apparatus</keyword>
<keyword id="KW-0597">Phosphoprotein</keyword>
<keyword id="KW-1267">Proteomics identification</keyword>
<keyword id="KW-1185">Reference proteome</keyword>
<keyword id="KW-0813">Transport</keyword>
<gene>
    <name type="primary">TRAPPC8</name>
    <name type="synonym">KIAA1012</name>
</gene>
<proteinExistence type="evidence at protein level"/>
<accession>Q9Y2L5</accession>
<accession>A0JP15</accession>
<accession>B3KME5</accession>
<accession>Q9H0L2</accession>
<organism>
    <name type="scientific">Homo sapiens</name>
    <name type="common">Human</name>
    <dbReference type="NCBI Taxonomy" id="9606"/>
    <lineage>
        <taxon>Eukaryota</taxon>
        <taxon>Metazoa</taxon>
        <taxon>Chordata</taxon>
        <taxon>Craniata</taxon>
        <taxon>Vertebrata</taxon>
        <taxon>Euteleostomi</taxon>
        <taxon>Mammalia</taxon>
        <taxon>Eutheria</taxon>
        <taxon>Euarchontoglires</taxon>
        <taxon>Primates</taxon>
        <taxon>Haplorrhini</taxon>
        <taxon>Catarrhini</taxon>
        <taxon>Hominidae</taxon>
        <taxon>Homo</taxon>
    </lineage>
</organism>
<evidence type="ECO:0000250" key="1"/>
<evidence type="ECO:0000256" key="2">
    <source>
        <dbReference type="SAM" id="MobiDB-lite"/>
    </source>
</evidence>
<evidence type="ECO:0000269" key="3">
    <source>
    </source>
</evidence>
<evidence type="ECO:0000269" key="4">
    <source>
    </source>
</evidence>
<evidence type="ECO:0000269" key="5">
    <source>
    </source>
</evidence>
<evidence type="ECO:0000269" key="6">
    <source>
    </source>
</evidence>
<evidence type="ECO:0000269" key="7">
    <source>
    </source>
</evidence>
<evidence type="ECO:0000269" key="8">
    <source>
    </source>
</evidence>
<evidence type="ECO:0000269" key="9">
    <source>
    </source>
</evidence>
<evidence type="ECO:0000303" key="10">
    <source>
    </source>
</evidence>
<evidence type="ECO:0000305" key="11"/>
<evidence type="ECO:0007744" key="12">
    <source>
    </source>
</evidence>
<evidence type="ECO:0007744" key="13">
    <source>
    </source>
</evidence>
<evidence type="ECO:0007744" key="14">
    <source>
    </source>
</evidence>
<protein>
    <recommendedName>
        <fullName>Trafficking protein particle complex subunit 8</fullName>
    </recommendedName>
    <alternativeName>
        <fullName>Protein TRS85 homolog</fullName>
    </alternativeName>
</protein>
<sequence length="1435" mass="160997">MAQCVQSVQELIPDSFVPCVAALCSDEAERLTRLNHLSFAELLKPFSRLTSEVHMRDPNNQLHVIKNLKIAVSNIVTQPPQPGAIRKLLNDVVSGSQPAEGLVANVITAGDYDLNISATTPWFESYRETFLQSMPALDHEFLNHYLACMLVASSSEAEPVEQFSKLSQEQHRIQHNSDYSYPKWFIPNTLKYYVLLHDVSAGDEQRAESIYEEMKQKYGTQGCYLLKINSRTSNRASDEQIPDPWSQYLQKNSIQNQESYEDGPCTITSNKNSDNNLLSLDGLDNEVKDGLPNNFRAHPLQLEQSSDPSNSIDGPDHLRSASSLHETKKGNTGIIHGACLTLTDHDRIRQFIQEFTFRGLLPHIEKTIRQLNDQLISRKGLSRSLFSATKKWFSGSKVPEKSINDLKNTSGLLYPPEAPELQIRKMADLCFLVQHYDLAYSCYHTAKKDFLNDQAMLYAAGALEMAAVSAFLQPGAPRPYPAHYMDTAIQTYRDICKNMVLAERCVLLSAELLKSQSKYSEAAALLIRLTSEDSDLRSALLLEQAAHCFINMKSPMVRKYAFHMILAGHRFSKAGQKKHALRCYCQAMQVYKGKGWSLAEDHINFTIGRQSYTLRQLDNAVSAFRHILINESKQSAAQQGAFLREYLYVYKNVSQLSPDGPLPQLPLPYINSSATRVFFGHDRRPADGEKQAATHVSLDQEYDSESSQQWRELEEQVVSVVNKGVIPSNFHPTQYCLNSYSDNSRFPLAVVEEPITVEVAFRNPLKVLLLLTDLSLLWKFHPKDFSGKDNEEVKQLVTSEPEMIGAEVISEFLINGEESKVARLKLFPHHIGELHILGVVYNLGTIQGSMTVDGIGALPGCHTGKYSLSMSVRGKQDLEIQGPRLNNTKEEKTSVKYGPDRRLDPIITEEMPLLEVFFIHFPTGLLCGEIRKAYVEFVNVSKCPLTGLKVVSKRPEFFTFGGNTAVLTPLSPSASENCSAYKTVVTDATSVCTALISSASSVDFGIGTGSQPEVIPVPLPDTVLLPGASVQLPMWLRGPDEEGVHEINFLFYYESVKKQPKIRHRILRHTAIICTSRSLNVRATVCRSNSLENEEGRGGNMLVFVDVENTNTSEAGVKEFHIVQVSSSSKHWKLQKSVNLSENKDTKLASREKGKFCFKAIRCEKEEAATQSSEKYTFADIIFGNEQIISSASPCADFFYRSLSSELKKPQAHLPVHTEKQSTEDAVRLIQKCSEVDLNIVILWKAYVVEDSKQLILEGQHHVILRTIGKEAFSYPQKQEPPEMELLKFFRPENITVSSRPSVEQLSSLIKTSLHYPESFNHPFHQKSLCLVPVTLLLSNCSKADVDVIVDLRHKTTSPEALEIHGSFTWLGQTQYKLQLKSQEIHSLQLKACFVHTGVYNLGTPRVFAKLSDQVTVFETSQQNSMPALIIISNV</sequence>
<reference key="1">
    <citation type="journal article" date="1999" name="DNA Res.">
        <title>Prediction of the coding sequences of unidentified human genes. XIII. The complete sequences of 100 new cDNA clones from brain which code for large proteins in vitro.</title>
        <authorList>
            <person name="Nagase T."/>
            <person name="Ishikawa K."/>
            <person name="Suyama M."/>
            <person name="Kikuno R."/>
            <person name="Hirosawa M."/>
            <person name="Miyajima N."/>
            <person name="Tanaka A."/>
            <person name="Kotani H."/>
            <person name="Nomura N."/>
            <person name="Ohara O."/>
        </authorList>
    </citation>
    <scope>NUCLEOTIDE SEQUENCE [LARGE SCALE MRNA] (ISOFORM 1)</scope>
    <scope>VARIANTS SER-137 AND ALA-1146</scope>
    <source>
        <tissue>Brain</tissue>
    </source>
</reference>
<reference key="2">
    <citation type="journal article" date="2001" name="Genome Res.">
        <title>Towards a catalog of human genes and proteins: sequencing and analysis of 500 novel complete protein coding human cDNAs.</title>
        <authorList>
            <person name="Wiemann S."/>
            <person name="Weil B."/>
            <person name="Wellenreuther R."/>
            <person name="Gassenhuber J."/>
            <person name="Glassl S."/>
            <person name="Ansorge W."/>
            <person name="Boecher M."/>
            <person name="Bloecker H."/>
            <person name="Bauersachs S."/>
            <person name="Blum H."/>
            <person name="Lauber J."/>
            <person name="Duesterhoeft A."/>
            <person name="Beyer A."/>
            <person name="Koehrer K."/>
            <person name="Strack N."/>
            <person name="Mewes H.-W."/>
            <person name="Ottenwaelder B."/>
            <person name="Obermaier B."/>
            <person name="Tampe J."/>
            <person name="Heubner D."/>
            <person name="Wambutt R."/>
            <person name="Korn B."/>
            <person name="Klein M."/>
            <person name="Poustka A."/>
        </authorList>
    </citation>
    <scope>NUCLEOTIDE SEQUENCE [LARGE SCALE MRNA] (ISOFORM 2)</scope>
    <scope>VARIANT SER-137</scope>
    <source>
        <tissue>Testis</tissue>
    </source>
</reference>
<reference key="3">
    <citation type="journal article" date="2005" name="Nature">
        <title>DNA sequence and analysis of human chromosome 18.</title>
        <authorList>
            <person name="Nusbaum C."/>
            <person name="Zody M.C."/>
            <person name="Borowsky M.L."/>
            <person name="Kamal M."/>
            <person name="Kodira C.D."/>
            <person name="Taylor T.D."/>
            <person name="Whittaker C.A."/>
            <person name="Chang J.L."/>
            <person name="Cuomo C.A."/>
            <person name="Dewar K."/>
            <person name="FitzGerald M.G."/>
            <person name="Yang X."/>
            <person name="Abouelleil A."/>
            <person name="Allen N.R."/>
            <person name="Anderson S."/>
            <person name="Bloom T."/>
            <person name="Bugalter B."/>
            <person name="Butler J."/>
            <person name="Cook A."/>
            <person name="DeCaprio D."/>
            <person name="Engels R."/>
            <person name="Garber M."/>
            <person name="Gnirke A."/>
            <person name="Hafez N."/>
            <person name="Hall J.L."/>
            <person name="Norman C.H."/>
            <person name="Itoh T."/>
            <person name="Jaffe D.B."/>
            <person name="Kuroki Y."/>
            <person name="Lehoczky J."/>
            <person name="Lui A."/>
            <person name="Macdonald P."/>
            <person name="Mauceli E."/>
            <person name="Mikkelsen T.S."/>
            <person name="Naylor J.W."/>
            <person name="Nicol R."/>
            <person name="Nguyen C."/>
            <person name="Noguchi H."/>
            <person name="O'Leary S.B."/>
            <person name="Piqani B."/>
            <person name="Smith C.L."/>
            <person name="Talamas J.A."/>
            <person name="Topham K."/>
            <person name="Totoki Y."/>
            <person name="Toyoda A."/>
            <person name="Wain H.M."/>
            <person name="Young S.K."/>
            <person name="Zeng Q."/>
            <person name="Zimmer A.R."/>
            <person name="Fujiyama A."/>
            <person name="Hattori M."/>
            <person name="Birren B.W."/>
            <person name="Sakaki Y."/>
            <person name="Lander E.S."/>
        </authorList>
    </citation>
    <scope>NUCLEOTIDE SEQUENCE [LARGE SCALE GENOMIC DNA]</scope>
</reference>
<reference key="4">
    <citation type="journal article" date="2004" name="Genome Res.">
        <title>The status, quality, and expansion of the NIH full-length cDNA project: the Mammalian Gene Collection (MGC).</title>
        <authorList>
            <consortium name="The MGC Project Team"/>
        </authorList>
    </citation>
    <scope>NUCLEOTIDE SEQUENCE [LARGE SCALE MRNA] OF 54-1435 (ISOFORM 1)</scope>
</reference>
<reference key="5">
    <citation type="journal article" date="2004" name="Nat. Genet.">
        <title>Complete sequencing and characterization of 21,243 full-length human cDNAs.</title>
        <authorList>
            <person name="Ota T."/>
            <person name="Suzuki Y."/>
            <person name="Nishikawa T."/>
            <person name="Otsuki T."/>
            <person name="Sugiyama T."/>
            <person name="Irie R."/>
            <person name="Wakamatsu A."/>
            <person name="Hayashi K."/>
            <person name="Sato H."/>
            <person name="Nagai K."/>
            <person name="Kimura K."/>
            <person name="Makita H."/>
            <person name="Sekine M."/>
            <person name="Obayashi M."/>
            <person name="Nishi T."/>
            <person name="Shibahara T."/>
            <person name="Tanaka T."/>
            <person name="Ishii S."/>
            <person name="Yamamoto J."/>
            <person name="Saito K."/>
            <person name="Kawai Y."/>
            <person name="Isono Y."/>
            <person name="Nakamura Y."/>
            <person name="Nagahari K."/>
            <person name="Murakami K."/>
            <person name="Yasuda T."/>
            <person name="Iwayanagi T."/>
            <person name="Wagatsuma M."/>
            <person name="Shiratori A."/>
            <person name="Sudo H."/>
            <person name="Hosoiri T."/>
            <person name="Kaku Y."/>
            <person name="Kodaira H."/>
            <person name="Kondo H."/>
            <person name="Sugawara M."/>
            <person name="Takahashi M."/>
            <person name="Kanda K."/>
            <person name="Yokoi T."/>
            <person name="Furuya T."/>
            <person name="Kikkawa E."/>
            <person name="Omura Y."/>
            <person name="Abe K."/>
            <person name="Kamihara K."/>
            <person name="Katsuta N."/>
            <person name="Sato K."/>
            <person name="Tanikawa M."/>
            <person name="Yamazaki M."/>
            <person name="Ninomiya K."/>
            <person name="Ishibashi T."/>
            <person name="Yamashita H."/>
            <person name="Murakawa K."/>
            <person name="Fujimori K."/>
            <person name="Tanai H."/>
            <person name="Kimata M."/>
            <person name="Watanabe M."/>
            <person name="Hiraoka S."/>
            <person name="Chiba Y."/>
            <person name="Ishida S."/>
            <person name="Ono Y."/>
            <person name="Takiguchi S."/>
            <person name="Watanabe S."/>
            <person name="Yosida M."/>
            <person name="Hotuta T."/>
            <person name="Kusano J."/>
            <person name="Kanehori K."/>
            <person name="Takahashi-Fujii A."/>
            <person name="Hara H."/>
            <person name="Tanase T.-O."/>
            <person name="Nomura Y."/>
            <person name="Togiya S."/>
            <person name="Komai F."/>
            <person name="Hara R."/>
            <person name="Takeuchi K."/>
            <person name="Arita M."/>
            <person name="Imose N."/>
            <person name="Musashino K."/>
            <person name="Yuuki H."/>
            <person name="Oshima A."/>
            <person name="Sasaki N."/>
            <person name="Aotsuka S."/>
            <person name="Yoshikawa Y."/>
            <person name="Matsunawa H."/>
            <person name="Ichihara T."/>
            <person name="Shiohata N."/>
            <person name="Sano S."/>
            <person name="Moriya S."/>
            <person name="Momiyama H."/>
            <person name="Satoh N."/>
            <person name="Takami S."/>
            <person name="Terashima Y."/>
            <person name="Suzuki O."/>
            <person name="Nakagawa S."/>
            <person name="Senoh A."/>
            <person name="Mizoguchi H."/>
            <person name="Goto Y."/>
            <person name="Shimizu F."/>
            <person name="Wakebe H."/>
            <person name="Hishigaki H."/>
            <person name="Watanabe T."/>
            <person name="Sugiyama A."/>
            <person name="Takemoto M."/>
            <person name="Kawakami B."/>
            <person name="Yamazaki M."/>
            <person name="Watanabe K."/>
            <person name="Kumagai A."/>
            <person name="Itakura S."/>
            <person name="Fukuzumi Y."/>
            <person name="Fujimori Y."/>
            <person name="Komiyama M."/>
            <person name="Tashiro H."/>
            <person name="Tanigami A."/>
            <person name="Fujiwara T."/>
            <person name="Ono T."/>
            <person name="Yamada K."/>
            <person name="Fujii Y."/>
            <person name="Ozaki K."/>
            <person name="Hirao M."/>
            <person name="Ohmori Y."/>
            <person name="Kawabata A."/>
            <person name="Hikiji T."/>
            <person name="Kobatake N."/>
            <person name="Inagaki H."/>
            <person name="Ikema Y."/>
            <person name="Okamoto S."/>
            <person name="Okitani R."/>
            <person name="Kawakami T."/>
            <person name="Noguchi S."/>
            <person name="Itoh T."/>
            <person name="Shigeta K."/>
            <person name="Senba T."/>
            <person name="Matsumura K."/>
            <person name="Nakajima Y."/>
            <person name="Mizuno T."/>
            <person name="Morinaga M."/>
            <person name="Sasaki M."/>
            <person name="Togashi T."/>
            <person name="Oyama M."/>
            <person name="Hata H."/>
            <person name="Watanabe M."/>
            <person name="Komatsu T."/>
            <person name="Mizushima-Sugano J."/>
            <person name="Satoh T."/>
            <person name="Shirai Y."/>
            <person name="Takahashi Y."/>
            <person name="Nakagawa K."/>
            <person name="Okumura K."/>
            <person name="Nagase T."/>
            <person name="Nomura N."/>
            <person name="Kikuchi H."/>
            <person name="Masuho Y."/>
            <person name="Yamashita R."/>
            <person name="Nakai K."/>
            <person name="Yada T."/>
            <person name="Nakamura Y."/>
            <person name="Ohara O."/>
            <person name="Isogai T."/>
            <person name="Sugano S."/>
        </authorList>
    </citation>
    <scope>NUCLEOTIDE SEQUENCE [LARGE SCALE MRNA] OF 427-1435 (ISOFORM 1)</scope>
    <source>
        <tissue>Teratocarcinoma</tissue>
    </source>
</reference>
<reference key="6">
    <citation type="journal article" date="2002" name="Nature">
        <title>Functional organization of the yeast proteome by systematic analysis of protein complexes.</title>
        <authorList>
            <person name="Gavin A.-C."/>
            <person name="Boesche M."/>
            <person name="Krause R."/>
            <person name="Grandi P."/>
            <person name="Marzioch M."/>
            <person name="Bauer A."/>
            <person name="Schultz J."/>
            <person name="Rick J.M."/>
            <person name="Michon A.-M."/>
            <person name="Cruciat C.-M."/>
            <person name="Remor M."/>
            <person name="Hoefert C."/>
            <person name="Schelder M."/>
            <person name="Brajenovic M."/>
            <person name="Ruffner H."/>
            <person name="Merino A."/>
            <person name="Klein K."/>
            <person name="Hudak M."/>
            <person name="Dickson D."/>
            <person name="Rudi T."/>
            <person name="Gnau V."/>
            <person name="Bauch A."/>
            <person name="Bastuck S."/>
            <person name="Huhse B."/>
            <person name="Leutwein C."/>
            <person name="Heurtier M.-A."/>
            <person name="Copley R.R."/>
            <person name="Edelmann A."/>
            <person name="Querfurth E."/>
            <person name="Rybin V."/>
            <person name="Drewes G."/>
            <person name="Raida M."/>
            <person name="Bouwmeester T."/>
            <person name="Bork P."/>
            <person name="Seraphin B."/>
            <person name="Kuster B."/>
            <person name="Neubauer G."/>
            <person name="Superti-Furga G."/>
        </authorList>
    </citation>
    <scope>IDENTIFICATION IN TRAPP COMPLEX</scope>
</reference>
<reference key="7">
    <citation type="journal article" date="2008" name="Proc. Natl. Acad. Sci. U.S.A.">
        <title>A quantitative atlas of mitotic phosphorylation.</title>
        <authorList>
            <person name="Dephoure N."/>
            <person name="Zhou C."/>
            <person name="Villen J."/>
            <person name="Beausoleil S.A."/>
            <person name="Bakalarski C.E."/>
            <person name="Elledge S.J."/>
            <person name="Gygi S.P."/>
        </authorList>
    </citation>
    <scope>IDENTIFICATION BY MASS SPECTROMETRY [LARGE SCALE ANALYSIS]</scope>
    <source>
        <tissue>Cervix carcinoma</tissue>
    </source>
</reference>
<reference key="8">
    <citation type="journal article" date="2011" name="BMC Syst. Biol.">
        <title>Initial characterization of the human central proteome.</title>
        <authorList>
            <person name="Burkard T.R."/>
            <person name="Planyavsky M."/>
            <person name="Kaupe I."/>
            <person name="Breitwieser F.P."/>
            <person name="Buerckstuemmer T."/>
            <person name="Bennett K.L."/>
            <person name="Superti-Furga G."/>
            <person name="Colinge J."/>
        </authorList>
    </citation>
    <scope>IDENTIFICATION BY MASS SPECTROMETRY [LARGE SCALE ANALYSIS]</scope>
</reference>
<reference key="9">
    <citation type="journal article" date="2011" name="Mol. Biol. Cell">
        <title>C4orf41 and TTC-15 are mammalian TRAPP components with a role at an early stage in ER-to-Golgi trafficking.</title>
        <authorList>
            <person name="Scrivens P.J."/>
            <person name="Noueihed B."/>
            <person name="Shahrzad N."/>
            <person name="Hul S."/>
            <person name="Brunet S."/>
            <person name="Sacher M."/>
        </authorList>
    </citation>
    <scope>FUNCTION</scope>
    <scope>IDENTIFICATION IN TRAPP COMPLEX</scope>
</reference>
<reference key="10">
    <citation type="journal article" date="2011" name="Sci. Signal.">
        <title>System-wide temporal characterization of the proteome and phosphoproteome of human embryonic stem cell differentiation.</title>
        <authorList>
            <person name="Rigbolt K.T."/>
            <person name="Prokhorova T.A."/>
            <person name="Akimov V."/>
            <person name="Henningsen J."/>
            <person name="Johansen P.T."/>
            <person name="Kratchmarova I."/>
            <person name="Kassem M."/>
            <person name="Mann M."/>
            <person name="Olsen J.V."/>
            <person name="Blagoev B."/>
        </authorList>
    </citation>
    <scope>PHOSPHORYLATION [LARGE SCALE ANALYSIS] AT SER-273</scope>
    <scope>IDENTIFICATION BY MASS SPECTROMETRY [LARGE SCALE ANALYSIS]</scope>
</reference>
<reference key="11">
    <citation type="journal article" date="2013" name="J. Proteome Res.">
        <title>Toward a comprehensive characterization of a human cancer cell phosphoproteome.</title>
        <authorList>
            <person name="Zhou H."/>
            <person name="Di Palma S."/>
            <person name="Preisinger C."/>
            <person name="Peng M."/>
            <person name="Polat A.N."/>
            <person name="Heck A.J."/>
            <person name="Mohammed S."/>
        </authorList>
    </citation>
    <scope>PHOSPHORYLATION [LARGE SCALE ANALYSIS] AT SER-279 AND SER-309</scope>
    <scope>IDENTIFICATION BY MASS SPECTROMETRY [LARGE SCALE ANALYSIS]</scope>
    <source>
        <tissue>Erythroleukemia</tissue>
    </source>
</reference>
<reference key="12">
    <citation type="journal article" date="2014" name="J. Proteomics">
        <title>An enzyme assisted RP-RPLC approach for in-depth analysis of human liver phosphoproteome.</title>
        <authorList>
            <person name="Bian Y."/>
            <person name="Song C."/>
            <person name="Cheng K."/>
            <person name="Dong M."/>
            <person name="Wang F."/>
            <person name="Huang J."/>
            <person name="Sun D."/>
            <person name="Wang L."/>
            <person name="Ye M."/>
            <person name="Zou H."/>
        </authorList>
    </citation>
    <scope>PHOSPHORYLATION [LARGE SCALE ANALYSIS] AT SER-273</scope>
    <scope>IDENTIFICATION BY MASS SPECTROMETRY [LARGE SCALE ANALYSIS]</scope>
    <source>
        <tissue>Liver</tissue>
    </source>
</reference>
<reference key="13">
    <citation type="journal article" date="2016" name="EMBO J.">
        <title>TBC1D14 regulates autophagy via the TRAPP complex and ATG9 traffic.</title>
        <authorList>
            <person name="Lamb C.A."/>
            <person name="Nuehlen S."/>
            <person name="Judith D."/>
            <person name="Frith D."/>
            <person name="Snijders A.P."/>
            <person name="Behrends C."/>
            <person name="Tooze S.A."/>
        </authorList>
    </citation>
    <scope>FUNCTION</scope>
    <scope>INTERACTION WITH TBC1D14</scope>
    <scope>SUBCELLULAR LOCATION</scope>
</reference>
<reference key="14">
    <citation type="journal article" date="2020" name="Sci. Adv.">
        <title>Broadly conserved roles of TMEM131 family proteins in intracellular collagen assembly and secretory cargo trafficking.</title>
        <authorList>
            <person name="Zhang Z."/>
            <person name="Bai M."/>
            <person name="Barbosa G.O."/>
            <person name="Chen A."/>
            <person name="Wei Y."/>
            <person name="Luo S."/>
            <person name="Wang X."/>
            <person name="Wang B."/>
            <person name="Tsukui T."/>
            <person name="Li H."/>
            <person name="Sheppard D."/>
            <person name="Kornberg T.B."/>
            <person name="Ma D.K."/>
        </authorList>
    </citation>
    <scope>FUNCTION</scope>
    <scope>INTERACTION WITH TMEM131</scope>
    <scope>MUTAGENESIS OF 1035-TRP--ASP-1040</scope>
</reference>
<reference key="15">
    <citation type="journal article" date="2006" name="Science">
        <title>The consensus coding sequences of human breast and colorectal cancers.</title>
        <authorList>
            <person name="Sjoeblom T."/>
            <person name="Jones S."/>
            <person name="Wood L.D."/>
            <person name="Parsons D.W."/>
            <person name="Lin J."/>
            <person name="Barber T.D."/>
            <person name="Mandelker D."/>
            <person name="Leary R.J."/>
            <person name="Ptak J."/>
            <person name="Silliman N."/>
            <person name="Szabo S."/>
            <person name="Buckhaults P."/>
            <person name="Farrell C."/>
            <person name="Meeh P."/>
            <person name="Markowitz S.D."/>
            <person name="Willis J."/>
            <person name="Dawson D."/>
            <person name="Willson J.K.V."/>
            <person name="Gazdar A.F."/>
            <person name="Hartigan J."/>
            <person name="Wu L."/>
            <person name="Liu C."/>
            <person name="Parmigiani G."/>
            <person name="Park B.H."/>
            <person name="Bachman K.E."/>
            <person name="Papadopoulos N."/>
            <person name="Vogelstein B."/>
            <person name="Kinzler K.W."/>
            <person name="Velculescu V.E."/>
        </authorList>
    </citation>
    <scope>VARIANT [LARGE SCALE ANALYSIS] GLN-537</scope>
</reference>